<organism>
    <name type="scientific">Bacillus cereus (strain ATCC 10987 / NRS 248)</name>
    <dbReference type="NCBI Taxonomy" id="222523"/>
    <lineage>
        <taxon>Bacteria</taxon>
        <taxon>Bacillati</taxon>
        <taxon>Bacillota</taxon>
        <taxon>Bacilli</taxon>
        <taxon>Bacillales</taxon>
        <taxon>Bacillaceae</taxon>
        <taxon>Bacillus</taxon>
        <taxon>Bacillus cereus group</taxon>
    </lineage>
</organism>
<gene>
    <name evidence="1" type="primary">metE</name>
    <name type="ordered locus">BCE_4053</name>
</gene>
<comment type="function">
    <text evidence="1">Catalyzes the transfer of a methyl group from 5-methyltetrahydrofolate to homocysteine resulting in methionine formation.</text>
</comment>
<comment type="catalytic activity">
    <reaction evidence="1">
        <text>5-methyltetrahydropteroyltri-L-glutamate + L-homocysteine = tetrahydropteroyltri-L-glutamate + L-methionine</text>
        <dbReference type="Rhea" id="RHEA:21196"/>
        <dbReference type="ChEBI" id="CHEBI:57844"/>
        <dbReference type="ChEBI" id="CHEBI:58140"/>
        <dbReference type="ChEBI" id="CHEBI:58199"/>
        <dbReference type="ChEBI" id="CHEBI:58207"/>
        <dbReference type="EC" id="2.1.1.14"/>
    </reaction>
</comment>
<comment type="cofactor">
    <cofactor evidence="1">
        <name>Zn(2+)</name>
        <dbReference type="ChEBI" id="CHEBI:29105"/>
    </cofactor>
    <text evidence="1">Binds 1 zinc ion per subunit.</text>
</comment>
<comment type="pathway">
    <text evidence="1">Amino-acid biosynthesis; L-methionine biosynthesis via de novo pathway; L-methionine from L-homocysteine (MetE route): step 1/1.</text>
</comment>
<comment type="similarity">
    <text evidence="1">Belongs to the vitamin-B12 independent methionine synthase family.</text>
</comment>
<feature type="chain" id="PRO_0000098610" description="5-methyltetrahydropteroyltriglutamate--homocysteine methyltransferase">
    <location>
        <begin position="1"/>
        <end position="762"/>
    </location>
</feature>
<feature type="active site" description="Proton donor" evidence="1">
    <location>
        <position position="698"/>
    </location>
</feature>
<feature type="binding site" evidence="1">
    <location>
        <begin position="17"/>
        <end position="20"/>
    </location>
    <ligand>
        <name>5-methyltetrahydropteroyltri-L-glutamate</name>
        <dbReference type="ChEBI" id="CHEBI:58207"/>
    </ligand>
</feature>
<feature type="binding site" evidence="1">
    <location>
        <position position="111"/>
    </location>
    <ligand>
        <name>5-methyltetrahydropteroyltri-L-glutamate</name>
        <dbReference type="ChEBI" id="CHEBI:58207"/>
    </ligand>
</feature>
<feature type="binding site" evidence="1">
    <location>
        <begin position="435"/>
        <end position="437"/>
    </location>
    <ligand>
        <name>L-homocysteine</name>
        <dbReference type="ChEBI" id="CHEBI:58199"/>
    </ligand>
</feature>
<feature type="binding site" evidence="1">
    <location>
        <begin position="435"/>
        <end position="437"/>
    </location>
    <ligand>
        <name>L-methionine</name>
        <dbReference type="ChEBI" id="CHEBI:57844"/>
    </ligand>
</feature>
<feature type="binding site" evidence="1">
    <location>
        <position position="488"/>
    </location>
    <ligand>
        <name>L-homocysteine</name>
        <dbReference type="ChEBI" id="CHEBI:58199"/>
    </ligand>
</feature>
<feature type="binding site" evidence="1">
    <location>
        <position position="488"/>
    </location>
    <ligand>
        <name>L-methionine</name>
        <dbReference type="ChEBI" id="CHEBI:57844"/>
    </ligand>
</feature>
<feature type="binding site" evidence="1">
    <location>
        <begin position="519"/>
        <end position="520"/>
    </location>
    <ligand>
        <name>5-methyltetrahydropteroyltri-L-glutamate</name>
        <dbReference type="ChEBI" id="CHEBI:58207"/>
    </ligand>
</feature>
<feature type="binding site" evidence="1">
    <location>
        <position position="565"/>
    </location>
    <ligand>
        <name>5-methyltetrahydropteroyltri-L-glutamate</name>
        <dbReference type="ChEBI" id="CHEBI:58207"/>
    </ligand>
</feature>
<feature type="binding site" evidence="1">
    <location>
        <position position="603"/>
    </location>
    <ligand>
        <name>L-homocysteine</name>
        <dbReference type="ChEBI" id="CHEBI:58199"/>
    </ligand>
</feature>
<feature type="binding site" evidence="1">
    <location>
        <position position="603"/>
    </location>
    <ligand>
        <name>L-methionine</name>
        <dbReference type="ChEBI" id="CHEBI:57844"/>
    </ligand>
</feature>
<feature type="binding site" evidence="1">
    <location>
        <position position="609"/>
    </location>
    <ligand>
        <name>5-methyltetrahydropteroyltri-L-glutamate</name>
        <dbReference type="ChEBI" id="CHEBI:58207"/>
    </ligand>
</feature>
<feature type="binding site" evidence="1">
    <location>
        <position position="645"/>
    </location>
    <ligand>
        <name>Zn(2+)</name>
        <dbReference type="ChEBI" id="CHEBI:29105"/>
        <note>catalytic</note>
    </ligand>
</feature>
<feature type="binding site" evidence="1">
    <location>
        <position position="647"/>
    </location>
    <ligand>
        <name>Zn(2+)</name>
        <dbReference type="ChEBI" id="CHEBI:29105"/>
        <note>catalytic</note>
    </ligand>
</feature>
<feature type="binding site" evidence="1">
    <location>
        <position position="669"/>
    </location>
    <ligand>
        <name>Zn(2+)</name>
        <dbReference type="ChEBI" id="CHEBI:29105"/>
        <note>catalytic</note>
    </ligand>
</feature>
<feature type="binding site" evidence="1">
    <location>
        <position position="730"/>
    </location>
    <ligand>
        <name>Zn(2+)</name>
        <dbReference type="ChEBI" id="CHEBI:29105"/>
        <note>catalytic</note>
    </ligand>
</feature>
<reference key="1">
    <citation type="journal article" date="2004" name="Nucleic Acids Res.">
        <title>The genome sequence of Bacillus cereus ATCC 10987 reveals metabolic adaptations and a large plasmid related to Bacillus anthracis pXO1.</title>
        <authorList>
            <person name="Rasko D.A."/>
            <person name="Ravel J."/>
            <person name="Oekstad O.A."/>
            <person name="Helgason E."/>
            <person name="Cer R.Z."/>
            <person name="Jiang L."/>
            <person name="Shores K.A."/>
            <person name="Fouts D.E."/>
            <person name="Tourasse N.J."/>
            <person name="Angiuoli S.V."/>
            <person name="Kolonay J.F."/>
            <person name="Nelson W.C."/>
            <person name="Kolstoe A.-B."/>
            <person name="Fraser C.M."/>
            <person name="Read T.D."/>
        </authorList>
    </citation>
    <scope>NUCLEOTIDE SEQUENCE [LARGE SCALE GENOMIC DNA]</scope>
    <source>
        <strain>ATCC 10987 / NRS 248</strain>
    </source>
</reference>
<dbReference type="EC" id="2.1.1.14" evidence="1"/>
<dbReference type="EMBL" id="AE017194">
    <property type="protein sequence ID" value="AAS42955.1"/>
    <property type="molecule type" value="Genomic_DNA"/>
</dbReference>
<dbReference type="SMR" id="Q731W2"/>
<dbReference type="KEGG" id="bca:BCE_4053"/>
<dbReference type="HOGENOM" id="CLU_013175_0_0_9"/>
<dbReference type="UniPathway" id="UPA00051">
    <property type="reaction ID" value="UER00082"/>
</dbReference>
<dbReference type="Proteomes" id="UP000002527">
    <property type="component" value="Chromosome"/>
</dbReference>
<dbReference type="GO" id="GO:0003871">
    <property type="term" value="F:5-methyltetrahydropteroyltriglutamate-homocysteine S-methyltransferase activity"/>
    <property type="evidence" value="ECO:0007669"/>
    <property type="project" value="UniProtKB-UniRule"/>
</dbReference>
<dbReference type="GO" id="GO:0008270">
    <property type="term" value="F:zinc ion binding"/>
    <property type="evidence" value="ECO:0007669"/>
    <property type="project" value="InterPro"/>
</dbReference>
<dbReference type="GO" id="GO:0009086">
    <property type="term" value="P:methionine biosynthetic process"/>
    <property type="evidence" value="ECO:0007669"/>
    <property type="project" value="UniProtKB-UniRule"/>
</dbReference>
<dbReference type="GO" id="GO:0032259">
    <property type="term" value="P:methylation"/>
    <property type="evidence" value="ECO:0007669"/>
    <property type="project" value="UniProtKB-KW"/>
</dbReference>
<dbReference type="CDD" id="cd03311">
    <property type="entry name" value="CIMS_C_terminal_like"/>
    <property type="match status" value="1"/>
</dbReference>
<dbReference type="CDD" id="cd03312">
    <property type="entry name" value="CIMS_N_terminal_like"/>
    <property type="match status" value="1"/>
</dbReference>
<dbReference type="Gene3D" id="3.20.20.210">
    <property type="match status" value="2"/>
</dbReference>
<dbReference type="HAMAP" id="MF_00172">
    <property type="entry name" value="Meth_synth"/>
    <property type="match status" value="1"/>
</dbReference>
<dbReference type="InterPro" id="IPR013215">
    <property type="entry name" value="Cbl-indep_Met_Synth_N"/>
</dbReference>
<dbReference type="InterPro" id="IPR006276">
    <property type="entry name" value="Cobalamin-indep_Met_synthase"/>
</dbReference>
<dbReference type="InterPro" id="IPR002629">
    <property type="entry name" value="Met_Synth_C/arc"/>
</dbReference>
<dbReference type="InterPro" id="IPR038071">
    <property type="entry name" value="UROD/MetE-like_sf"/>
</dbReference>
<dbReference type="NCBIfam" id="TIGR01371">
    <property type="entry name" value="met_syn_B12ind"/>
    <property type="match status" value="1"/>
</dbReference>
<dbReference type="NCBIfam" id="NF003556">
    <property type="entry name" value="PRK05222.1"/>
    <property type="match status" value="1"/>
</dbReference>
<dbReference type="PANTHER" id="PTHR30519">
    <property type="entry name" value="5-METHYLTETRAHYDROPTEROYLTRIGLUTAMATE--HOMOCYSTEINE METHYLTRANSFERASE"/>
    <property type="match status" value="1"/>
</dbReference>
<dbReference type="Pfam" id="PF08267">
    <property type="entry name" value="Meth_synt_1"/>
    <property type="match status" value="1"/>
</dbReference>
<dbReference type="Pfam" id="PF01717">
    <property type="entry name" value="Meth_synt_2"/>
    <property type="match status" value="1"/>
</dbReference>
<dbReference type="PIRSF" id="PIRSF000382">
    <property type="entry name" value="MeTrfase_B12_ind"/>
    <property type="match status" value="1"/>
</dbReference>
<dbReference type="SUPFAM" id="SSF51726">
    <property type="entry name" value="UROD/MetE-like"/>
    <property type="match status" value="2"/>
</dbReference>
<protein>
    <recommendedName>
        <fullName evidence="1">5-methyltetrahydropteroyltriglutamate--homocysteine methyltransferase</fullName>
        <ecNumber evidence="1">2.1.1.14</ecNumber>
    </recommendedName>
    <alternativeName>
        <fullName evidence="1">Cobalamin-independent methionine synthase</fullName>
    </alternativeName>
    <alternativeName>
        <fullName evidence="1">Methionine synthase, vitamin-B12 independent isozyme</fullName>
    </alternativeName>
</protein>
<proteinExistence type="inferred from homology"/>
<name>METE_BACC1</name>
<evidence type="ECO:0000255" key="1">
    <source>
        <dbReference type="HAMAP-Rule" id="MF_00172"/>
    </source>
</evidence>
<keyword id="KW-0028">Amino-acid biosynthesis</keyword>
<keyword id="KW-0479">Metal-binding</keyword>
<keyword id="KW-0486">Methionine biosynthesis</keyword>
<keyword id="KW-0489">Methyltransferase</keyword>
<keyword id="KW-0677">Repeat</keyword>
<keyword id="KW-0808">Transferase</keyword>
<keyword id="KW-0862">Zinc</keyword>
<sequence length="762" mass="87325">MAIQTSNLGYPRIGLQREWKKTLEAFWSNKIDEEQFLTTMKEIRLQHVKAQQEKGIELIPIGDFTYYDHVLDTAYMLGFIPSRFSEFTSYLDVYFAMARGSKDHVASEMTKWFNTNYHYIVPEYEEGLQISLKDNRPLRLYEEAKQELGIDGKPVILGPYTFLKLAKGYTQEQFATILKQLVAPYVQLLSELHAAGAQIIQVDEPIFASLTKEEVQQAKEIYEAIRKEVPNANLLLQTYFDSVEENYEEIITFPVSSIGLDFVHGKEGNLHAISKYGFPADKTLAVGCIDGRNIWRADLDEVLTLFTTLQKQVQTKDFIVQPSCSLLHTPIDKTEETHLSTELFDALAFANQKLEELVLIHSALTQGTESIHNELETYRNVHHTIRSSAARNREDVKAARTALKEEDFSRPLPFEKRYELQQVALKLPLLPTTTIGSFPQTTEVRQTRKEWRNGVISNEQYEQFIEKETEKWIRYQEEIGLDVLVHGEFERTDMVEYFGERLAGFSFTKNGWVQSYGSRCVKPPVIYGDVAFINGMTIKETVYAQSLTEKVVKGMLTGPVTILNWSFVRNDIPRKEVSYQIALALRHEIELLESSGIRVIQVDEPALREGMPLKEKDWDAYITWAVQSFLLATSSVANETQIHTHMCYSNFEDIVDAIRALDADVISIETSRSHGEFIDTLKHTTYEKGIGLGVYDIHSPRVPSKDEMYKIVEQSLKVCDPKYFWINPDCGLKTRRTEEVIPALEHMVQAAKDARSLLKTNA</sequence>
<accession>Q731W2</accession>